<accession>A6T5E6</accession>
<keyword id="KW-0067">ATP-binding</keyword>
<keyword id="KW-0238">DNA-binding</keyword>
<keyword id="KW-0479">Metal-binding</keyword>
<keyword id="KW-0547">Nucleotide-binding</keyword>
<keyword id="KW-0678">Repressor</keyword>
<keyword id="KW-0804">Transcription</keyword>
<keyword id="KW-0805">Transcription regulation</keyword>
<keyword id="KW-0862">Zinc</keyword>
<keyword id="KW-0863">Zinc-finger</keyword>
<gene>
    <name evidence="1" type="primary">nrdR</name>
    <name type="ordered locus">KPN78578_03560</name>
    <name type="ORF">KPN_00365</name>
</gene>
<comment type="function">
    <text evidence="1">Negatively regulates transcription of bacterial ribonucleotide reductase nrd genes and operons by binding to NrdR-boxes.</text>
</comment>
<comment type="cofactor">
    <cofactor evidence="1">
        <name>Zn(2+)</name>
        <dbReference type="ChEBI" id="CHEBI:29105"/>
    </cofactor>
    <text evidence="1">Binds 1 zinc ion.</text>
</comment>
<comment type="similarity">
    <text evidence="1">Belongs to the NrdR family.</text>
</comment>
<feature type="chain" id="PRO_1000080761" description="Transcriptional repressor NrdR">
    <location>
        <begin position="1"/>
        <end position="149"/>
    </location>
</feature>
<feature type="domain" description="ATP-cone" evidence="1">
    <location>
        <begin position="49"/>
        <end position="139"/>
    </location>
</feature>
<feature type="zinc finger region" evidence="1">
    <location>
        <begin position="3"/>
        <end position="34"/>
    </location>
</feature>
<organism>
    <name type="scientific">Klebsiella pneumoniae subsp. pneumoniae (strain ATCC 700721 / MGH 78578)</name>
    <dbReference type="NCBI Taxonomy" id="272620"/>
    <lineage>
        <taxon>Bacteria</taxon>
        <taxon>Pseudomonadati</taxon>
        <taxon>Pseudomonadota</taxon>
        <taxon>Gammaproteobacteria</taxon>
        <taxon>Enterobacterales</taxon>
        <taxon>Enterobacteriaceae</taxon>
        <taxon>Klebsiella/Raoultella group</taxon>
        <taxon>Klebsiella</taxon>
        <taxon>Klebsiella pneumoniae complex</taxon>
    </lineage>
</organism>
<protein>
    <recommendedName>
        <fullName evidence="1">Transcriptional repressor NrdR</fullName>
    </recommendedName>
</protein>
<evidence type="ECO:0000255" key="1">
    <source>
        <dbReference type="HAMAP-Rule" id="MF_00440"/>
    </source>
</evidence>
<name>NRDR_KLEP7</name>
<sequence>MHCPFCFAVDTKVIDSRLVGEGSSVRRRRQCLVCNERFTTFEVAELVMPRVVKSNDVREPFNEDKLRSGMLKALEKRPVSADDVEMAVNHIKTHLRGTGEREVASKMIGNLVMEQLKKLDKVAYIRFASVYRSFEDIKEFGEEIARLQD</sequence>
<proteinExistence type="inferred from homology"/>
<dbReference type="EMBL" id="CP000647">
    <property type="protein sequence ID" value="ABR75817.1"/>
    <property type="molecule type" value="Genomic_DNA"/>
</dbReference>
<dbReference type="RefSeq" id="WP_002890417.1">
    <property type="nucleotide sequence ID" value="NC_009648.1"/>
</dbReference>
<dbReference type="SMR" id="A6T5E6"/>
<dbReference type="STRING" id="272620.KPN_00365"/>
<dbReference type="jPOST" id="A6T5E6"/>
<dbReference type="PaxDb" id="272620-KPN_00365"/>
<dbReference type="EnsemblBacteria" id="ABR75817">
    <property type="protein sequence ID" value="ABR75817"/>
    <property type="gene ID" value="KPN_00365"/>
</dbReference>
<dbReference type="GeneID" id="93310689"/>
<dbReference type="KEGG" id="kpn:KPN_00365"/>
<dbReference type="HOGENOM" id="CLU_108412_0_0_6"/>
<dbReference type="Proteomes" id="UP000000265">
    <property type="component" value="Chromosome"/>
</dbReference>
<dbReference type="GO" id="GO:0005524">
    <property type="term" value="F:ATP binding"/>
    <property type="evidence" value="ECO:0007669"/>
    <property type="project" value="UniProtKB-KW"/>
</dbReference>
<dbReference type="GO" id="GO:0003677">
    <property type="term" value="F:DNA binding"/>
    <property type="evidence" value="ECO:0007669"/>
    <property type="project" value="UniProtKB-KW"/>
</dbReference>
<dbReference type="GO" id="GO:0008270">
    <property type="term" value="F:zinc ion binding"/>
    <property type="evidence" value="ECO:0007669"/>
    <property type="project" value="UniProtKB-UniRule"/>
</dbReference>
<dbReference type="GO" id="GO:0045892">
    <property type="term" value="P:negative regulation of DNA-templated transcription"/>
    <property type="evidence" value="ECO:0007669"/>
    <property type="project" value="UniProtKB-UniRule"/>
</dbReference>
<dbReference type="HAMAP" id="MF_00440">
    <property type="entry name" value="NrdR"/>
    <property type="match status" value="1"/>
</dbReference>
<dbReference type="InterPro" id="IPR005144">
    <property type="entry name" value="ATP-cone_dom"/>
</dbReference>
<dbReference type="InterPro" id="IPR055173">
    <property type="entry name" value="NrdR-like_N"/>
</dbReference>
<dbReference type="InterPro" id="IPR003796">
    <property type="entry name" value="RNR_NrdR-like"/>
</dbReference>
<dbReference type="NCBIfam" id="TIGR00244">
    <property type="entry name" value="transcriptional regulator NrdR"/>
    <property type="match status" value="1"/>
</dbReference>
<dbReference type="PANTHER" id="PTHR30455">
    <property type="entry name" value="TRANSCRIPTIONAL REPRESSOR NRDR"/>
    <property type="match status" value="1"/>
</dbReference>
<dbReference type="PANTHER" id="PTHR30455:SF2">
    <property type="entry name" value="TRANSCRIPTIONAL REPRESSOR NRDR"/>
    <property type="match status" value="1"/>
</dbReference>
<dbReference type="Pfam" id="PF03477">
    <property type="entry name" value="ATP-cone"/>
    <property type="match status" value="1"/>
</dbReference>
<dbReference type="Pfam" id="PF22811">
    <property type="entry name" value="Zn_ribbon_NrdR"/>
    <property type="match status" value="1"/>
</dbReference>
<dbReference type="PROSITE" id="PS51161">
    <property type="entry name" value="ATP_CONE"/>
    <property type="match status" value="1"/>
</dbReference>
<reference key="1">
    <citation type="submission" date="2006-09" db="EMBL/GenBank/DDBJ databases">
        <authorList>
            <consortium name="The Klebsiella pneumonia Genome Sequencing Project"/>
            <person name="McClelland M."/>
            <person name="Sanderson E.K."/>
            <person name="Spieth J."/>
            <person name="Clifton W.S."/>
            <person name="Latreille P."/>
            <person name="Sabo A."/>
            <person name="Pepin K."/>
            <person name="Bhonagiri V."/>
            <person name="Porwollik S."/>
            <person name="Ali J."/>
            <person name="Wilson R.K."/>
        </authorList>
    </citation>
    <scope>NUCLEOTIDE SEQUENCE [LARGE SCALE GENOMIC DNA]</scope>
    <source>
        <strain>ATCC 700721 / MGH 78578</strain>
    </source>
</reference>